<evidence type="ECO:0000255" key="1">
    <source>
        <dbReference type="HAMAP-Rule" id="MF_00051"/>
    </source>
</evidence>
<accession>Q83BT3</accession>
<feature type="chain" id="PRO_0000113569" description="Serine hydroxymethyltransferase">
    <location>
        <begin position="1"/>
        <end position="419"/>
    </location>
</feature>
<feature type="binding site" evidence="1">
    <location>
        <position position="121"/>
    </location>
    <ligand>
        <name>(6S)-5,6,7,8-tetrahydrofolate</name>
        <dbReference type="ChEBI" id="CHEBI:57453"/>
    </ligand>
</feature>
<feature type="binding site" evidence="1">
    <location>
        <begin position="125"/>
        <end position="127"/>
    </location>
    <ligand>
        <name>(6S)-5,6,7,8-tetrahydrofolate</name>
        <dbReference type="ChEBI" id="CHEBI:57453"/>
    </ligand>
</feature>
<feature type="binding site" evidence="1">
    <location>
        <begin position="354"/>
        <end position="356"/>
    </location>
    <ligand>
        <name>(6S)-5,6,7,8-tetrahydrofolate</name>
        <dbReference type="ChEBI" id="CHEBI:57453"/>
    </ligand>
</feature>
<feature type="site" description="Plays an important role in substrate specificity" evidence="1">
    <location>
        <position position="228"/>
    </location>
</feature>
<feature type="modified residue" description="N6-(pyridoxal phosphate)lysine" evidence="1">
    <location>
        <position position="229"/>
    </location>
</feature>
<keyword id="KW-0028">Amino-acid biosynthesis</keyword>
<keyword id="KW-0963">Cytoplasm</keyword>
<keyword id="KW-0554">One-carbon metabolism</keyword>
<keyword id="KW-0663">Pyridoxal phosphate</keyword>
<keyword id="KW-1185">Reference proteome</keyword>
<keyword id="KW-0808">Transferase</keyword>
<dbReference type="EC" id="2.1.2.1" evidence="1"/>
<dbReference type="EMBL" id="AE016828">
    <property type="protein sequence ID" value="AAO90917.1"/>
    <property type="molecule type" value="Genomic_DNA"/>
</dbReference>
<dbReference type="RefSeq" id="NP_820403.1">
    <property type="nucleotide sequence ID" value="NC_002971.3"/>
</dbReference>
<dbReference type="RefSeq" id="WP_010958216.1">
    <property type="nucleotide sequence ID" value="NC_002971.4"/>
</dbReference>
<dbReference type="SMR" id="Q83BT3"/>
<dbReference type="STRING" id="227377.CBU_1419"/>
<dbReference type="EnsemblBacteria" id="AAO90917">
    <property type="protein sequence ID" value="AAO90917"/>
    <property type="gene ID" value="CBU_1419"/>
</dbReference>
<dbReference type="GeneID" id="1209325"/>
<dbReference type="KEGG" id="cbu:CBU_1419"/>
<dbReference type="PATRIC" id="fig|227377.7.peg.1419"/>
<dbReference type="eggNOG" id="COG0112">
    <property type="taxonomic scope" value="Bacteria"/>
</dbReference>
<dbReference type="HOGENOM" id="CLU_022477_2_1_6"/>
<dbReference type="OrthoDB" id="9803846at2"/>
<dbReference type="UniPathway" id="UPA00193"/>
<dbReference type="UniPathway" id="UPA00288">
    <property type="reaction ID" value="UER01023"/>
</dbReference>
<dbReference type="Proteomes" id="UP000002671">
    <property type="component" value="Chromosome"/>
</dbReference>
<dbReference type="GO" id="GO:0005737">
    <property type="term" value="C:cytoplasm"/>
    <property type="evidence" value="ECO:0000318"/>
    <property type="project" value="GO_Central"/>
</dbReference>
<dbReference type="GO" id="GO:0005829">
    <property type="term" value="C:cytosol"/>
    <property type="evidence" value="ECO:0000318"/>
    <property type="project" value="GO_Central"/>
</dbReference>
<dbReference type="GO" id="GO:0004372">
    <property type="term" value="F:glycine hydroxymethyltransferase activity"/>
    <property type="evidence" value="ECO:0000318"/>
    <property type="project" value="GO_Central"/>
</dbReference>
<dbReference type="GO" id="GO:0030170">
    <property type="term" value="F:pyridoxal phosphate binding"/>
    <property type="evidence" value="ECO:0000318"/>
    <property type="project" value="GO_Central"/>
</dbReference>
<dbReference type="GO" id="GO:0019264">
    <property type="term" value="P:glycine biosynthetic process from serine"/>
    <property type="evidence" value="ECO:0000318"/>
    <property type="project" value="GO_Central"/>
</dbReference>
<dbReference type="GO" id="GO:0035999">
    <property type="term" value="P:tetrahydrofolate interconversion"/>
    <property type="evidence" value="ECO:0007669"/>
    <property type="project" value="UniProtKB-UniRule"/>
</dbReference>
<dbReference type="GO" id="GO:0046653">
    <property type="term" value="P:tetrahydrofolate metabolic process"/>
    <property type="evidence" value="ECO:0000318"/>
    <property type="project" value="GO_Central"/>
</dbReference>
<dbReference type="CDD" id="cd00378">
    <property type="entry name" value="SHMT"/>
    <property type="match status" value="1"/>
</dbReference>
<dbReference type="FunFam" id="3.40.640.10:FF:000001">
    <property type="entry name" value="Serine hydroxymethyltransferase"/>
    <property type="match status" value="1"/>
</dbReference>
<dbReference type="FunFam" id="3.90.1150.10:FF:000003">
    <property type="entry name" value="Serine hydroxymethyltransferase"/>
    <property type="match status" value="1"/>
</dbReference>
<dbReference type="Gene3D" id="3.90.1150.10">
    <property type="entry name" value="Aspartate Aminotransferase, domain 1"/>
    <property type="match status" value="1"/>
</dbReference>
<dbReference type="Gene3D" id="3.40.640.10">
    <property type="entry name" value="Type I PLP-dependent aspartate aminotransferase-like (Major domain)"/>
    <property type="match status" value="1"/>
</dbReference>
<dbReference type="HAMAP" id="MF_00051">
    <property type="entry name" value="SHMT"/>
    <property type="match status" value="1"/>
</dbReference>
<dbReference type="InterPro" id="IPR015424">
    <property type="entry name" value="PyrdxlP-dep_Trfase"/>
</dbReference>
<dbReference type="InterPro" id="IPR015421">
    <property type="entry name" value="PyrdxlP-dep_Trfase_major"/>
</dbReference>
<dbReference type="InterPro" id="IPR015422">
    <property type="entry name" value="PyrdxlP-dep_Trfase_small"/>
</dbReference>
<dbReference type="InterPro" id="IPR001085">
    <property type="entry name" value="Ser_HO-MeTrfase"/>
</dbReference>
<dbReference type="InterPro" id="IPR049943">
    <property type="entry name" value="Ser_HO-MeTrfase-like"/>
</dbReference>
<dbReference type="InterPro" id="IPR019798">
    <property type="entry name" value="Ser_HO-MeTrfase_PLP_BS"/>
</dbReference>
<dbReference type="InterPro" id="IPR039429">
    <property type="entry name" value="SHMT-like_dom"/>
</dbReference>
<dbReference type="NCBIfam" id="NF000586">
    <property type="entry name" value="PRK00011.1"/>
    <property type="match status" value="1"/>
</dbReference>
<dbReference type="PANTHER" id="PTHR11680">
    <property type="entry name" value="SERINE HYDROXYMETHYLTRANSFERASE"/>
    <property type="match status" value="1"/>
</dbReference>
<dbReference type="PANTHER" id="PTHR11680:SF50">
    <property type="entry name" value="SERINE HYDROXYMETHYLTRANSFERASE"/>
    <property type="match status" value="1"/>
</dbReference>
<dbReference type="Pfam" id="PF00464">
    <property type="entry name" value="SHMT"/>
    <property type="match status" value="1"/>
</dbReference>
<dbReference type="PIRSF" id="PIRSF000412">
    <property type="entry name" value="SHMT"/>
    <property type="match status" value="1"/>
</dbReference>
<dbReference type="SUPFAM" id="SSF53383">
    <property type="entry name" value="PLP-dependent transferases"/>
    <property type="match status" value="1"/>
</dbReference>
<dbReference type="PROSITE" id="PS00096">
    <property type="entry name" value="SHMT"/>
    <property type="match status" value="1"/>
</dbReference>
<name>GLYA_COXBU</name>
<sequence length="419" mass="45801">MYEPTLTVESFDSELAGAIRDERRRQEHHVELIASENYVSPRVLELQGSVLTNKYAEGYPGRRYYGGCEFVDIAEQLAIDRAKELFGADYANVQPHSGSQANAEAYMALMNPGDTLLAMDLSHGGHLTHGSPVSFSGKFYKAVHYGLNAHGDIDYEQAAQLAQEHKPKVILAGFSAFSGIVDWQRFREIADSVNAYFMTDIAHVAGLVAAGVYPSPVQIADVTTTTTHKTLRGPRAGLILAKANPELEKRLNSAVFPGSQGGPLMHIIAAKAVAFKEAMQPEFKTYAQQILKNAKAMAEVMKERGYTIVSGGTQNHLFLVSLLDKNISGKEAEAALGRANITVNKNTVPGETRSPFVTSGLRIGTPAITTRGFKEKEASQLAHWVCDILDDIHNEKVIADVKQKAHELCGKFPVYQELD</sequence>
<protein>
    <recommendedName>
        <fullName evidence="1">Serine hydroxymethyltransferase</fullName>
        <shortName evidence="1">SHMT</shortName>
        <shortName evidence="1">Serine methylase</shortName>
        <ecNumber evidence="1">2.1.2.1</ecNumber>
    </recommendedName>
</protein>
<organism>
    <name type="scientific">Coxiella burnetii (strain RSA 493 / Nine Mile phase I)</name>
    <dbReference type="NCBI Taxonomy" id="227377"/>
    <lineage>
        <taxon>Bacteria</taxon>
        <taxon>Pseudomonadati</taxon>
        <taxon>Pseudomonadota</taxon>
        <taxon>Gammaproteobacteria</taxon>
        <taxon>Legionellales</taxon>
        <taxon>Coxiellaceae</taxon>
        <taxon>Coxiella</taxon>
    </lineage>
</organism>
<reference key="1">
    <citation type="journal article" date="2003" name="Proc. Natl. Acad. Sci. U.S.A.">
        <title>Complete genome sequence of the Q-fever pathogen, Coxiella burnetii.</title>
        <authorList>
            <person name="Seshadri R."/>
            <person name="Paulsen I.T."/>
            <person name="Eisen J.A."/>
            <person name="Read T.D."/>
            <person name="Nelson K.E."/>
            <person name="Nelson W.C."/>
            <person name="Ward N.L."/>
            <person name="Tettelin H."/>
            <person name="Davidsen T.M."/>
            <person name="Beanan M.J."/>
            <person name="DeBoy R.T."/>
            <person name="Daugherty S.C."/>
            <person name="Brinkac L.M."/>
            <person name="Madupu R."/>
            <person name="Dodson R.J."/>
            <person name="Khouri H.M."/>
            <person name="Lee K.H."/>
            <person name="Carty H.A."/>
            <person name="Scanlan D."/>
            <person name="Heinzen R.A."/>
            <person name="Thompson H.A."/>
            <person name="Samuel J.E."/>
            <person name="Fraser C.M."/>
            <person name="Heidelberg J.F."/>
        </authorList>
    </citation>
    <scope>NUCLEOTIDE SEQUENCE [LARGE SCALE GENOMIC DNA]</scope>
    <source>
        <strain>RSA 493 / Nine Mile phase I</strain>
    </source>
</reference>
<comment type="function">
    <text evidence="1">Catalyzes the reversible interconversion of serine and glycine with tetrahydrofolate (THF) serving as the one-carbon carrier. This reaction serves as the major source of one-carbon groups required for the biosynthesis of purines, thymidylate, methionine, and other important biomolecules. Also exhibits THF-independent aldolase activity toward beta-hydroxyamino acids, producing glycine and aldehydes, via a retro-aldol mechanism.</text>
</comment>
<comment type="catalytic activity">
    <reaction evidence="1">
        <text>(6R)-5,10-methylene-5,6,7,8-tetrahydrofolate + glycine + H2O = (6S)-5,6,7,8-tetrahydrofolate + L-serine</text>
        <dbReference type="Rhea" id="RHEA:15481"/>
        <dbReference type="ChEBI" id="CHEBI:15377"/>
        <dbReference type="ChEBI" id="CHEBI:15636"/>
        <dbReference type="ChEBI" id="CHEBI:33384"/>
        <dbReference type="ChEBI" id="CHEBI:57305"/>
        <dbReference type="ChEBI" id="CHEBI:57453"/>
        <dbReference type="EC" id="2.1.2.1"/>
    </reaction>
</comment>
<comment type="cofactor">
    <cofactor evidence="1">
        <name>pyridoxal 5'-phosphate</name>
        <dbReference type="ChEBI" id="CHEBI:597326"/>
    </cofactor>
</comment>
<comment type="pathway">
    <text evidence="1">One-carbon metabolism; tetrahydrofolate interconversion.</text>
</comment>
<comment type="pathway">
    <text evidence="1">Amino-acid biosynthesis; glycine biosynthesis; glycine from L-serine: step 1/1.</text>
</comment>
<comment type="subunit">
    <text evidence="1">Homodimer.</text>
</comment>
<comment type="subcellular location">
    <subcellularLocation>
        <location evidence="1">Cytoplasm</location>
    </subcellularLocation>
</comment>
<comment type="similarity">
    <text evidence="1">Belongs to the SHMT family.</text>
</comment>
<proteinExistence type="inferred from homology"/>
<gene>
    <name evidence="1" type="primary">glyA</name>
    <name type="ordered locus">CBU_1419</name>
</gene>